<reference key="1">
    <citation type="submission" date="2004-11" db="EMBL/GenBank/DDBJ databases">
        <authorList>
            <consortium name="The German cDNA consortium"/>
        </authorList>
    </citation>
    <scope>NUCLEOTIDE SEQUENCE [LARGE SCALE MRNA]</scope>
    <source>
        <tissue>Brain cortex</tissue>
    </source>
</reference>
<evidence type="ECO:0000255" key="1">
    <source>
        <dbReference type="PROSITE-ProRule" id="PRU00159"/>
    </source>
</evidence>
<evidence type="ECO:0000256" key="2">
    <source>
        <dbReference type="SAM" id="MobiDB-lite"/>
    </source>
</evidence>
<name>RPKL1_PONAB</name>
<dbReference type="EC" id="2.7.11.1"/>
<dbReference type="EMBL" id="CR859152">
    <property type="protein sequence ID" value="CAH91343.1"/>
    <property type="molecule type" value="mRNA"/>
</dbReference>
<dbReference type="RefSeq" id="NP_001125795.1">
    <property type="nucleotide sequence ID" value="NM_001132323.2"/>
</dbReference>
<dbReference type="SMR" id="Q5RA67"/>
<dbReference type="FunCoup" id="Q5RA67">
    <property type="interactions" value="138"/>
</dbReference>
<dbReference type="STRING" id="9601.ENSPPYP00000006814"/>
<dbReference type="GeneID" id="100172723"/>
<dbReference type="KEGG" id="pon:100172723"/>
<dbReference type="CTD" id="83694"/>
<dbReference type="eggNOG" id="KOG0603">
    <property type="taxonomic scope" value="Eukaryota"/>
</dbReference>
<dbReference type="InParanoid" id="Q5RA67"/>
<dbReference type="OrthoDB" id="1278353at2759"/>
<dbReference type="Proteomes" id="UP000001595">
    <property type="component" value="Unplaced"/>
</dbReference>
<dbReference type="GO" id="GO:1990904">
    <property type="term" value="C:ribonucleoprotein complex"/>
    <property type="evidence" value="ECO:0007669"/>
    <property type="project" value="UniProtKB-KW"/>
</dbReference>
<dbReference type="GO" id="GO:0005840">
    <property type="term" value="C:ribosome"/>
    <property type="evidence" value="ECO:0007669"/>
    <property type="project" value="UniProtKB-KW"/>
</dbReference>
<dbReference type="GO" id="GO:0005524">
    <property type="term" value="F:ATP binding"/>
    <property type="evidence" value="ECO:0007669"/>
    <property type="project" value="UniProtKB-KW"/>
</dbReference>
<dbReference type="GO" id="GO:0106310">
    <property type="term" value="F:protein serine kinase activity"/>
    <property type="evidence" value="ECO:0007669"/>
    <property type="project" value="RHEA"/>
</dbReference>
<dbReference type="GO" id="GO:0004674">
    <property type="term" value="F:protein serine/threonine kinase activity"/>
    <property type="evidence" value="ECO:0007669"/>
    <property type="project" value="UniProtKB-KW"/>
</dbReference>
<dbReference type="CDD" id="cd02677">
    <property type="entry name" value="MIT_SNX15"/>
    <property type="match status" value="1"/>
</dbReference>
<dbReference type="CDD" id="cd05576">
    <property type="entry name" value="STKc_RPK118_like"/>
    <property type="match status" value="1"/>
</dbReference>
<dbReference type="Gene3D" id="1.20.58.80">
    <property type="entry name" value="Phosphotransferase system, lactose/cellobiose-type IIA subunit"/>
    <property type="match status" value="1"/>
</dbReference>
<dbReference type="Gene3D" id="1.10.510.10">
    <property type="entry name" value="Transferase(Phosphotransferase) domain 1"/>
    <property type="match status" value="1"/>
</dbReference>
<dbReference type="InterPro" id="IPR051866">
    <property type="entry name" value="Intracell_Sig-Traffick_Protein"/>
</dbReference>
<dbReference type="InterPro" id="IPR011009">
    <property type="entry name" value="Kinase-like_dom_sf"/>
</dbReference>
<dbReference type="InterPro" id="IPR007330">
    <property type="entry name" value="MIT_dom"/>
</dbReference>
<dbReference type="InterPro" id="IPR036181">
    <property type="entry name" value="MIT_dom_sf"/>
</dbReference>
<dbReference type="InterPro" id="IPR000719">
    <property type="entry name" value="Prot_kinase_dom"/>
</dbReference>
<dbReference type="InterPro" id="IPR035053">
    <property type="entry name" value="STK_RPK118-like"/>
</dbReference>
<dbReference type="PANTHER" id="PTHR15508">
    <property type="entry name" value="RIBOSOMAL PROTEIN S6 KINASE"/>
    <property type="match status" value="1"/>
</dbReference>
<dbReference type="PANTHER" id="PTHR15508:SF4">
    <property type="entry name" value="RIBOSOMAL PROTEIN S6 KINASE-LIKE 1"/>
    <property type="match status" value="1"/>
</dbReference>
<dbReference type="Pfam" id="PF04212">
    <property type="entry name" value="MIT"/>
    <property type="match status" value="1"/>
</dbReference>
<dbReference type="Pfam" id="PF00069">
    <property type="entry name" value="Pkinase"/>
    <property type="match status" value="1"/>
</dbReference>
<dbReference type="SMART" id="SM00745">
    <property type="entry name" value="MIT"/>
    <property type="match status" value="1"/>
</dbReference>
<dbReference type="SUPFAM" id="SSF116846">
    <property type="entry name" value="MIT domain"/>
    <property type="match status" value="1"/>
</dbReference>
<dbReference type="SUPFAM" id="SSF56112">
    <property type="entry name" value="Protein kinase-like (PK-like)"/>
    <property type="match status" value="1"/>
</dbReference>
<dbReference type="PROSITE" id="PS50011">
    <property type="entry name" value="PROTEIN_KINASE_DOM"/>
    <property type="match status" value="1"/>
</dbReference>
<keyword id="KW-0067">ATP-binding</keyword>
<keyword id="KW-0418">Kinase</keyword>
<keyword id="KW-0547">Nucleotide-binding</keyword>
<keyword id="KW-1185">Reference proteome</keyword>
<keyword id="KW-0687">Ribonucleoprotein</keyword>
<keyword id="KW-0689">Ribosomal protein</keyword>
<keyword id="KW-0723">Serine/threonine-protein kinase</keyword>
<keyword id="KW-0808">Transferase</keyword>
<protein>
    <recommendedName>
        <fullName>Ribosomal protein S6 kinase-like 1</fullName>
        <ecNumber>2.7.11.1</ecNumber>
    </recommendedName>
</protein>
<accession>Q5RA67</accession>
<organism>
    <name type="scientific">Pongo abelii</name>
    <name type="common">Sumatran orangutan</name>
    <name type="synonym">Pongo pygmaeus abelii</name>
    <dbReference type="NCBI Taxonomy" id="9601"/>
    <lineage>
        <taxon>Eukaryota</taxon>
        <taxon>Metazoa</taxon>
        <taxon>Chordata</taxon>
        <taxon>Craniata</taxon>
        <taxon>Vertebrata</taxon>
        <taxon>Euteleostomi</taxon>
        <taxon>Mammalia</taxon>
        <taxon>Eutheria</taxon>
        <taxon>Euarchontoglires</taxon>
        <taxon>Primates</taxon>
        <taxon>Haplorrhini</taxon>
        <taxon>Catarrhini</taxon>
        <taxon>Hominidae</taxon>
        <taxon>Pongo</taxon>
    </lineage>
</organism>
<comment type="catalytic activity">
    <reaction>
        <text>L-seryl-[protein] + ATP = O-phospho-L-seryl-[protein] + ADP + H(+)</text>
        <dbReference type="Rhea" id="RHEA:17989"/>
        <dbReference type="Rhea" id="RHEA-COMP:9863"/>
        <dbReference type="Rhea" id="RHEA-COMP:11604"/>
        <dbReference type="ChEBI" id="CHEBI:15378"/>
        <dbReference type="ChEBI" id="CHEBI:29999"/>
        <dbReference type="ChEBI" id="CHEBI:30616"/>
        <dbReference type="ChEBI" id="CHEBI:83421"/>
        <dbReference type="ChEBI" id="CHEBI:456216"/>
        <dbReference type="EC" id="2.7.11.1"/>
    </reaction>
</comment>
<comment type="catalytic activity">
    <reaction>
        <text>L-threonyl-[protein] + ATP = O-phospho-L-threonyl-[protein] + ADP + H(+)</text>
        <dbReference type="Rhea" id="RHEA:46608"/>
        <dbReference type="Rhea" id="RHEA-COMP:11060"/>
        <dbReference type="Rhea" id="RHEA-COMP:11605"/>
        <dbReference type="ChEBI" id="CHEBI:15378"/>
        <dbReference type="ChEBI" id="CHEBI:30013"/>
        <dbReference type="ChEBI" id="CHEBI:30616"/>
        <dbReference type="ChEBI" id="CHEBI:61977"/>
        <dbReference type="ChEBI" id="CHEBI:456216"/>
        <dbReference type="EC" id="2.7.11.1"/>
    </reaction>
</comment>
<comment type="similarity">
    <text evidence="1">Belongs to the protein kinase superfamily. Ser/Thr protein kinase family. S6 kinase subfamily.</text>
</comment>
<gene>
    <name type="primary">RPS6KL1</name>
</gene>
<feature type="chain" id="PRO_0000232643" description="Ribosomal protein S6 kinase-like 1">
    <location>
        <begin position="1"/>
        <end position="549"/>
    </location>
</feature>
<feature type="domain" description="MIT">
    <location>
        <begin position="87"/>
        <end position="115"/>
    </location>
</feature>
<feature type="domain" description="Protein kinase" evidence="1">
    <location>
        <begin position="145"/>
        <end position="539"/>
    </location>
</feature>
<feature type="region of interest" description="Disordered" evidence="2">
    <location>
        <begin position="260"/>
        <end position="325"/>
    </location>
</feature>
<feature type="active site" description="Proton acceptor" evidence="1">
    <location>
        <position position="412"/>
    </location>
</feature>
<feature type="binding site" evidence="1">
    <location>
        <begin position="151"/>
        <end position="159"/>
    </location>
    <ligand>
        <name>ATP</name>
        <dbReference type="ChEBI" id="CHEBI:30616"/>
    </ligand>
</feature>
<feature type="binding site" evidence="1">
    <location>
        <position position="177"/>
    </location>
    <ligand>
        <name>ATP</name>
        <dbReference type="ChEBI" id="CHEBI:30616"/>
    </ligand>
</feature>
<proteinExistence type="evidence at transcript level"/>
<sequence length="549" mass="59973">MSLVACECLPSPGLEPEPCSRARSQACVYLEQIRNRVALGVPDMTKRDYLVDAATQIRLALERDVSEDYEAAFNHYQNGVDVLLRGIHVDPNKERREAVKLKITKYLRRAEEIFNCHLQRPLSSGASPSTGFSSLRLRPIRTLGSAVEQLRGCRVVGVIEKVQLVQDSATGGTFVVKSLPRCHMVSRERLTIIPHGVPYMTKLLRYFMSEDSIFLHLEHVQGGTLWSHLLSQAHPRHSGLSSGSTQERMKAQLNPHLNLLTPARLPSGHAPGKDRIALEPPRTSPSLPLAGEAPSIRPQREAEGEPTARTSTSGSSDLPKAPGGHLHLQARRAGQNSDAGPPRGLTWVPEGAGPVLGGCGRGMDQSCLSADGAGRGCGRATWSVREEQVKQWAAETLVALEALHEQGVLCRDLHPGNLLLDQAGHIRLTYFGQWSEVEPQCCGEAVDNLYSAPEVGGISELTEACDWWSFGSLLYELLTGMALSQSHPSGIQAHTQLQLPEWLSRPAASLLTELLQFEPTRRLGMGEGGVSKLKSHPFFSTIQWSKLVG</sequence>